<sequence>MGHQESPLARAPAGGAAYVKRLCKGLSWREHVESHGSLGAQASPASAAAAEGSATRRARAATSRAARSRRQPGPGADHPQAGAPGGKRAARKWRCAGQVTIQGPAPPRPRAGRRDEAGGARAAPLLLPPPPAAMETGKDGARRGTQSPERKRRSPVPRAPSTKLRPAAAARAMDPVAAEAPGEAFLARRRPEGGGGSARPRYSLLAEIGRGSYGVVYEAVAGRSGARVAVKKIRCDAPENVELALAEFWALTSLKRRHQNVVQFEECVLQRNGLAQRMSHGNKSSQLYLRLVETSLKGERILGYAEEPCYLWFVMEFCEGGDLNQYVLSRRPDPATNKSFMLQLTSAIAFLHKNHIVHRDLKPDNILITERSGTPILKVADFGLSKVCAGLAPRGKEGNQDNKNVNVNKYWLSSACGSDFYMAPEVWEGHYTAKADIFALGIIIWAMIERITFIDSETKKELLGTYIKQGTEIVPVGEALLENPKMELHIPQKRRTSMSEGIKQLLKDMLAANPQDRPDAFELETRMDQVTCAA</sequence>
<proteinExistence type="evidence at protein level"/>
<reference key="1">
    <citation type="journal article" date="2009" name="PLoS ONE">
        <title>Identifying and characterizing a novel protein kinase STK35L1 and deciphering its orthologs and close-homologs in vertebrates.</title>
        <authorList>
            <person name="Goyal P."/>
            <person name="Behring A."/>
            <person name="Kumar A."/>
            <person name="Siess W."/>
        </authorList>
    </citation>
    <scope>NUCLEOTIDE SEQUENCE [MRNA]</scope>
    <scope>SUBCELLULAR LOCATION</scope>
</reference>
<reference key="2">
    <citation type="journal article" date="2001" name="Nature">
        <title>The DNA sequence and comparative analysis of human chromosome 20.</title>
        <authorList>
            <person name="Deloukas P."/>
            <person name="Matthews L.H."/>
            <person name="Ashurst J.L."/>
            <person name="Burton J."/>
            <person name="Gilbert J.G.R."/>
            <person name="Jones M."/>
            <person name="Stavrides G."/>
            <person name="Almeida J.P."/>
            <person name="Babbage A.K."/>
            <person name="Bagguley C.L."/>
            <person name="Bailey J."/>
            <person name="Barlow K.F."/>
            <person name="Bates K.N."/>
            <person name="Beard L.M."/>
            <person name="Beare D.M."/>
            <person name="Beasley O.P."/>
            <person name="Bird C.P."/>
            <person name="Blakey S.E."/>
            <person name="Bridgeman A.M."/>
            <person name="Brown A.J."/>
            <person name="Buck D."/>
            <person name="Burrill W.D."/>
            <person name="Butler A.P."/>
            <person name="Carder C."/>
            <person name="Carter N.P."/>
            <person name="Chapman J.C."/>
            <person name="Clamp M."/>
            <person name="Clark G."/>
            <person name="Clark L.N."/>
            <person name="Clark S.Y."/>
            <person name="Clee C.M."/>
            <person name="Clegg S."/>
            <person name="Cobley V.E."/>
            <person name="Collier R.E."/>
            <person name="Connor R.E."/>
            <person name="Corby N.R."/>
            <person name="Coulson A."/>
            <person name="Coville G.J."/>
            <person name="Deadman R."/>
            <person name="Dhami P.D."/>
            <person name="Dunn M."/>
            <person name="Ellington A.G."/>
            <person name="Frankland J.A."/>
            <person name="Fraser A."/>
            <person name="French L."/>
            <person name="Garner P."/>
            <person name="Grafham D.V."/>
            <person name="Griffiths C."/>
            <person name="Griffiths M.N.D."/>
            <person name="Gwilliam R."/>
            <person name="Hall R.E."/>
            <person name="Hammond S."/>
            <person name="Harley J.L."/>
            <person name="Heath P.D."/>
            <person name="Ho S."/>
            <person name="Holden J.L."/>
            <person name="Howden P.J."/>
            <person name="Huckle E."/>
            <person name="Hunt A.R."/>
            <person name="Hunt S.E."/>
            <person name="Jekosch K."/>
            <person name="Johnson C.M."/>
            <person name="Johnson D."/>
            <person name="Kay M.P."/>
            <person name="Kimberley A.M."/>
            <person name="King A."/>
            <person name="Knights A."/>
            <person name="Laird G.K."/>
            <person name="Lawlor S."/>
            <person name="Lehvaeslaiho M.H."/>
            <person name="Leversha M.A."/>
            <person name="Lloyd C."/>
            <person name="Lloyd D.M."/>
            <person name="Lovell J.D."/>
            <person name="Marsh V.L."/>
            <person name="Martin S.L."/>
            <person name="McConnachie L.J."/>
            <person name="McLay K."/>
            <person name="McMurray A.A."/>
            <person name="Milne S.A."/>
            <person name="Mistry D."/>
            <person name="Moore M.J.F."/>
            <person name="Mullikin J.C."/>
            <person name="Nickerson T."/>
            <person name="Oliver K."/>
            <person name="Parker A."/>
            <person name="Patel R."/>
            <person name="Pearce T.A.V."/>
            <person name="Peck A.I."/>
            <person name="Phillimore B.J.C.T."/>
            <person name="Prathalingam S.R."/>
            <person name="Plumb R.W."/>
            <person name="Ramsay H."/>
            <person name="Rice C.M."/>
            <person name="Ross M.T."/>
            <person name="Scott C.E."/>
            <person name="Sehra H.K."/>
            <person name="Shownkeen R."/>
            <person name="Sims S."/>
            <person name="Skuce C.D."/>
            <person name="Smith M.L."/>
            <person name="Soderlund C."/>
            <person name="Steward C.A."/>
            <person name="Sulston J.E."/>
            <person name="Swann R.M."/>
            <person name="Sycamore N."/>
            <person name="Taylor R."/>
            <person name="Tee L."/>
            <person name="Thomas D.W."/>
            <person name="Thorpe A."/>
            <person name="Tracey A."/>
            <person name="Tromans A.C."/>
            <person name="Vaudin M."/>
            <person name="Wall M."/>
            <person name="Wallis J.M."/>
            <person name="Whitehead S.L."/>
            <person name="Whittaker P."/>
            <person name="Willey D.L."/>
            <person name="Williams L."/>
            <person name="Williams S.A."/>
            <person name="Wilming L."/>
            <person name="Wray P.W."/>
            <person name="Hubbard T."/>
            <person name="Durbin R.M."/>
            <person name="Bentley D.R."/>
            <person name="Beck S."/>
            <person name="Rogers J."/>
        </authorList>
    </citation>
    <scope>NUCLEOTIDE SEQUENCE [LARGE SCALE GENOMIC DNA]</scope>
</reference>
<reference key="3">
    <citation type="journal article" date="2004" name="Nat. Genet.">
        <title>Complete sequencing and characterization of 21,243 full-length human cDNAs.</title>
        <authorList>
            <person name="Ota T."/>
            <person name="Suzuki Y."/>
            <person name="Nishikawa T."/>
            <person name="Otsuki T."/>
            <person name="Sugiyama T."/>
            <person name="Irie R."/>
            <person name="Wakamatsu A."/>
            <person name="Hayashi K."/>
            <person name="Sato H."/>
            <person name="Nagai K."/>
            <person name="Kimura K."/>
            <person name="Makita H."/>
            <person name="Sekine M."/>
            <person name="Obayashi M."/>
            <person name="Nishi T."/>
            <person name="Shibahara T."/>
            <person name="Tanaka T."/>
            <person name="Ishii S."/>
            <person name="Yamamoto J."/>
            <person name="Saito K."/>
            <person name="Kawai Y."/>
            <person name="Isono Y."/>
            <person name="Nakamura Y."/>
            <person name="Nagahari K."/>
            <person name="Murakami K."/>
            <person name="Yasuda T."/>
            <person name="Iwayanagi T."/>
            <person name="Wagatsuma M."/>
            <person name="Shiratori A."/>
            <person name="Sudo H."/>
            <person name="Hosoiri T."/>
            <person name="Kaku Y."/>
            <person name="Kodaira H."/>
            <person name="Kondo H."/>
            <person name="Sugawara M."/>
            <person name="Takahashi M."/>
            <person name="Kanda K."/>
            <person name="Yokoi T."/>
            <person name="Furuya T."/>
            <person name="Kikkawa E."/>
            <person name="Omura Y."/>
            <person name="Abe K."/>
            <person name="Kamihara K."/>
            <person name="Katsuta N."/>
            <person name="Sato K."/>
            <person name="Tanikawa M."/>
            <person name="Yamazaki M."/>
            <person name="Ninomiya K."/>
            <person name="Ishibashi T."/>
            <person name="Yamashita H."/>
            <person name="Murakawa K."/>
            <person name="Fujimori K."/>
            <person name="Tanai H."/>
            <person name="Kimata M."/>
            <person name="Watanabe M."/>
            <person name="Hiraoka S."/>
            <person name="Chiba Y."/>
            <person name="Ishida S."/>
            <person name="Ono Y."/>
            <person name="Takiguchi S."/>
            <person name="Watanabe S."/>
            <person name="Yosida M."/>
            <person name="Hotuta T."/>
            <person name="Kusano J."/>
            <person name="Kanehori K."/>
            <person name="Takahashi-Fujii A."/>
            <person name="Hara H."/>
            <person name="Tanase T.-O."/>
            <person name="Nomura Y."/>
            <person name="Togiya S."/>
            <person name="Komai F."/>
            <person name="Hara R."/>
            <person name="Takeuchi K."/>
            <person name="Arita M."/>
            <person name="Imose N."/>
            <person name="Musashino K."/>
            <person name="Yuuki H."/>
            <person name="Oshima A."/>
            <person name="Sasaki N."/>
            <person name="Aotsuka S."/>
            <person name="Yoshikawa Y."/>
            <person name="Matsunawa H."/>
            <person name="Ichihara T."/>
            <person name="Shiohata N."/>
            <person name="Sano S."/>
            <person name="Moriya S."/>
            <person name="Momiyama H."/>
            <person name="Satoh N."/>
            <person name="Takami S."/>
            <person name="Terashima Y."/>
            <person name="Suzuki O."/>
            <person name="Nakagawa S."/>
            <person name="Senoh A."/>
            <person name="Mizoguchi H."/>
            <person name="Goto Y."/>
            <person name="Shimizu F."/>
            <person name="Wakebe H."/>
            <person name="Hishigaki H."/>
            <person name="Watanabe T."/>
            <person name="Sugiyama A."/>
            <person name="Takemoto M."/>
            <person name="Kawakami B."/>
            <person name="Yamazaki M."/>
            <person name="Watanabe K."/>
            <person name="Kumagai A."/>
            <person name="Itakura S."/>
            <person name="Fukuzumi Y."/>
            <person name="Fujimori Y."/>
            <person name="Komiyama M."/>
            <person name="Tashiro H."/>
            <person name="Tanigami A."/>
            <person name="Fujiwara T."/>
            <person name="Ono T."/>
            <person name="Yamada K."/>
            <person name="Fujii Y."/>
            <person name="Ozaki K."/>
            <person name="Hirao M."/>
            <person name="Ohmori Y."/>
            <person name="Kawabata A."/>
            <person name="Hikiji T."/>
            <person name="Kobatake N."/>
            <person name="Inagaki H."/>
            <person name="Ikema Y."/>
            <person name="Okamoto S."/>
            <person name="Okitani R."/>
            <person name="Kawakami T."/>
            <person name="Noguchi S."/>
            <person name="Itoh T."/>
            <person name="Shigeta K."/>
            <person name="Senba T."/>
            <person name="Matsumura K."/>
            <person name="Nakajima Y."/>
            <person name="Mizuno T."/>
            <person name="Morinaga M."/>
            <person name="Sasaki M."/>
            <person name="Togashi T."/>
            <person name="Oyama M."/>
            <person name="Hata H."/>
            <person name="Watanabe M."/>
            <person name="Komatsu T."/>
            <person name="Mizushima-Sugano J."/>
            <person name="Satoh T."/>
            <person name="Shirai Y."/>
            <person name="Takahashi Y."/>
            <person name="Nakagawa K."/>
            <person name="Okumura K."/>
            <person name="Nagase T."/>
            <person name="Nomura N."/>
            <person name="Kikuchi H."/>
            <person name="Masuho Y."/>
            <person name="Yamashita R."/>
            <person name="Nakai K."/>
            <person name="Yada T."/>
            <person name="Nakamura Y."/>
            <person name="Ohara O."/>
            <person name="Isogai T."/>
            <person name="Sugano S."/>
        </authorList>
    </citation>
    <scope>NUCLEOTIDE SEQUENCE [LARGE SCALE MRNA] OF 51-534</scope>
    <source>
        <tissue>Cerebellum</tissue>
    </source>
</reference>
<reference key="4">
    <citation type="journal article" date="2004" name="Genome Res.">
        <title>The status, quality, and expansion of the NIH full-length cDNA project: the Mammalian Gene Collection (MGC).</title>
        <authorList>
            <consortium name="The MGC Project Team"/>
        </authorList>
    </citation>
    <scope>NUCLEOTIDE SEQUENCE [LARGE SCALE MRNA] OF 101-534</scope>
    <source>
        <tissue>Skin</tissue>
    </source>
</reference>
<reference key="5">
    <citation type="journal article" date="2002" name="J. Cell Sci.">
        <title>Clik1: a novel kinase targeted to actin stress fibers by the CLP-36 PDZ-LIM protein.</title>
        <authorList>
            <person name="Vallenius T."/>
            <person name="Maekelae T.P."/>
        </authorList>
    </citation>
    <scope>NUCLEOTIDE SEQUENCE [MRNA] OF 134-534</scope>
    <scope>MUTAGENESIS OF LYS-231</scope>
    <scope>SUBCELLULAR LOCATION</scope>
    <scope>AUTOPHOSPHORYLATION</scope>
</reference>
<evidence type="ECO:0000255" key="1">
    <source>
        <dbReference type="PROSITE-ProRule" id="PRU00159"/>
    </source>
</evidence>
<evidence type="ECO:0000255" key="2">
    <source>
        <dbReference type="PROSITE-ProRule" id="PRU10027"/>
    </source>
</evidence>
<evidence type="ECO:0000256" key="3">
    <source>
        <dbReference type="SAM" id="MobiDB-lite"/>
    </source>
</evidence>
<evidence type="ECO:0000269" key="4">
    <source>
    </source>
</evidence>
<evidence type="ECO:0000305" key="5"/>
<evidence type="ECO:0000305" key="6">
    <source>
    </source>
</evidence>
<accession>Q8TDR2</accession>
<accession>B2RBM3</accession>
<accession>C7ENV8</accession>
<accession>Q2NKW6</accession>
<accession>Q5T3R1</accession>
<accession>Q5T3R2</accession>
<accession>Q96AB4</accession>
<accession>Q9BZ06</accession>
<gene>
    <name type="primary">STK35</name>
    <name type="synonym">CLIK1</name>
    <name type="synonym">PDIK1</name>
    <name type="synonym">STK35L1</name>
</gene>
<name>STK35_HUMAN</name>
<comment type="catalytic activity">
    <reaction>
        <text>L-seryl-[protein] + ATP = O-phospho-L-seryl-[protein] + ADP + H(+)</text>
        <dbReference type="Rhea" id="RHEA:17989"/>
        <dbReference type="Rhea" id="RHEA-COMP:9863"/>
        <dbReference type="Rhea" id="RHEA-COMP:11604"/>
        <dbReference type="ChEBI" id="CHEBI:15378"/>
        <dbReference type="ChEBI" id="CHEBI:29999"/>
        <dbReference type="ChEBI" id="CHEBI:30616"/>
        <dbReference type="ChEBI" id="CHEBI:83421"/>
        <dbReference type="ChEBI" id="CHEBI:456216"/>
        <dbReference type="EC" id="2.7.11.1"/>
    </reaction>
</comment>
<comment type="catalytic activity">
    <reaction>
        <text>L-threonyl-[protein] + ATP = O-phospho-L-threonyl-[protein] + ADP + H(+)</text>
        <dbReference type="Rhea" id="RHEA:46608"/>
        <dbReference type="Rhea" id="RHEA-COMP:11060"/>
        <dbReference type="Rhea" id="RHEA-COMP:11605"/>
        <dbReference type="ChEBI" id="CHEBI:15378"/>
        <dbReference type="ChEBI" id="CHEBI:30013"/>
        <dbReference type="ChEBI" id="CHEBI:30616"/>
        <dbReference type="ChEBI" id="CHEBI:61977"/>
        <dbReference type="ChEBI" id="CHEBI:456216"/>
        <dbReference type="EC" id="2.7.11.1"/>
    </reaction>
</comment>
<comment type="subunit">
    <text>Interacts with PDLIM1/CLP-36.</text>
</comment>
<comment type="interaction">
    <interactant intactId="EBI-18986091">
        <id>Q8TDR2</id>
    </interactant>
    <interactant intactId="EBI-1051317">
        <id>Q9H4L5</id>
        <label>OSBPL3</label>
    </interactant>
    <organismsDiffer>false</organismsDiffer>
    <experiments>3</experiments>
</comment>
<comment type="subcellular location">
    <subcellularLocation>
        <location>Nucleus</location>
    </subcellularLocation>
    <subcellularLocation>
        <location>Nucleus</location>
        <location>Nucleolus</location>
    </subcellularLocation>
    <subcellularLocation>
        <location>Cytoplasm</location>
    </subcellularLocation>
    <text evidence="4">When associated with PDLIM1, it is mostly found in cytoplasm, localized to actin stress fibers (PubMed:11973348). However, PubMed:19756140 detected STK35 only in the nucleus, and the presence of PDLIM1 had no influence on its location.</text>
</comment>
<comment type="tissue specificity">
    <text>Expressed in testis.</text>
</comment>
<comment type="PTM">
    <text>Autophosphorylated.</text>
</comment>
<comment type="miscellaneous">
    <text evidence="6">Association with PDLIM1 is controversial.</text>
</comment>
<comment type="similarity">
    <text evidence="1">Belongs to the protein kinase superfamily. Ser/Thr protein kinase family.</text>
</comment>
<comment type="sequence caution" evidence="5">
    <conflict type="erroneous initiation">
        <sequence resource="EMBL-CDS" id="AAI40884"/>
    </conflict>
    <text>Truncated N-terminus.</text>
</comment>
<comment type="sequence caution" evidence="5">
    <conflict type="erroneous initiation">
        <sequence resource="EMBL-CDS" id="AAI40885"/>
    </conflict>
    <text>Truncated N-terminus.</text>
</comment>
<comment type="sequence caution" evidence="5">
    <conflict type="erroneous initiation">
        <sequence resource="EMBL-CDS" id="BAG37270"/>
    </conflict>
    <text>Truncated N-terminus.</text>
</comment>
<keyword id="KW-0067">ATP-binding</keyword>
<keyword id="KW-0963">Cytoplasm</keyword>
<keyword id="KW-0418">Kinase</keyword>
<keyword id="KW-0547">Nucleotide-binding</keyword>
<keyword id="KW-0539">Nucleus</keyword>
<keyword id="KW-0597">Phosphoprotein</keyword>
<keyword id="KW-1267">Proteomics identification</keyword>
<keyword id="KW-1185">Reference proteome</keyword>
<keyword id="KW-0723">Serine/threonine-protein kinase</keyword>
<keyword id="KW-0808">Transferase</keyword>
<protein>
    <recommendedName>
        <fullName>Serine/threonine-protein kinase 35</fullName>
        <ecNumber>2.7.11.1</ecNumber>
    </recommendedName>
    <alternativeName>
        <fullName>CLP-36-interacting kinase 1</fullName>
        <shortName>CLIK-1</shortName>
    </alternativeName>
    <alternativeName>
        <fullName>PDLIM1-interacting kinase 1</fullName>
    </alternativeName>
    <alternativeName>
        <fullName>Serine/threonine-protein kinase 35 L1</fullName>
    </alternativeName>
</protein>
<feature type="chain" id="PRO_0000086717" description="Serine/threonine-protein kinase 35">
    <location>
        <begin position="1"/>
        <end position="534"/>
    </location>
</feature>
<feature type="domain" description="Protein kinase" evidence="1">
    <location>
        <begin position="202"/>
        <end position="530"/>
    </location>
</feature>
<feature type="region of interest" description="Disordered" evidence="3">
    <location>
        <begin position="32"/>
        <end position="176"/>
    </location>
</feature>
<feature type="compositionally biased region" description="Low complexity" evidence="3">
    <location>
        <begin position="39"/>
        <end position="65"/>
    </location>
</feature>
<feature type="compositionally biased region" description="Low complexity" evidence="3">
    <location>
        <begin position="166"/>
        <end position="176"/>
    </location>
</feature>
<feature type="active site" description="Proton acceptor" evidence="1 2">
    <location>
        <position position="360"/>
    </location>
</feature>
<feature type="binding site" evidence="1">
    <location>
        <begin position="208"/>
        <end position="216"/>
    </location>
    <ligand>
        <name>ATP</name>
        <dbReference type="ChEBI" id="CHEBI:30616"/>
    </ligand>
</feature>
<feature type="binding site" evidence="5">
    <location>
        <position position="231"/>
    </location>
    <ligand>
        <name>ATP</name>
        <dbReference type="ChEBI" id="CHEBI:30616"/>
    </ligand>
</feature>
<feature type="mutagenesis site" description="No autophosphorylation." evidence="4">
    <original>K</original>
    <variation>M</variation>
    <location>
        <position position="231"/>
    </location>
</feature>
<feature type="sequence conflict" description="In Ref. 3; BAG37270." evidence="5" ref="3">
    <original>R</original>
    <variation>G</variation>
    <location>
        <position position="69"/>
    </location>
</feature>
<feature type="sequence conflict" description="In Ref. 3; BAG37270." evidence="5" ref="3">
    <original>D</original>
    <variation>G</variation>
    <location>
        <position position="115"/>
    </location>
</feature>
<feature type="sequence conflict" description="In Ref. 4; AAI11574." evidence="5" ref="4">
    <original>YLRLVETSLKGERILGYAEE</original>
    <variation>GNGEGRRPQRYTKPGAEKAK</variation>
    <location>
        <begin position="288"/>
        <end position="307"/>
    </location>
</feature>
<organism>
    <name type="scientific">Homo sapiens</name>
    <name type="common">Human</name>
    <dbReference type="NCBI Taxonomy" id="9606"/>
    <lineage>
        <taxon>Eukaryota</taxon>
        <taxon>Metazoa</taxon>
        <taxon>Chordata</taxon>
        <taxon>Craniata</taxon>
        <taxon>Vertebrata</taxon>
        <taxon>Euteleostomi</taxon>
        <taxon>Mammalia</taxon>
        <taxon>Eutheria</taxon>
        <taxon>Euarchontoglires</taxon>
        <taxon>Primates</taxon>
        <taxon>Haplorrhini</taxon>
        <taxon>Catarrhini</taxon>
        <taxon>Hominidae</taxon>
        <taxon>Homo</taxon>
    </lineage>
</organism>
<dbReference type="EC" id="2.7.11.1"/>
<dbReference type="EMBL" id="GQ281297">
    <property type="protein sequence ID" value="ACU33925.1"/>
    <property type="molecule type" value="mRNA"/>
</dbReference>
<dbReference type="EMBL" id="AL359916">
    <property type="status" value="NOT_ANNOTATED_CDS"/>
    <property type="molecule type" value="Genomic_DNA"/>
</dbReference>
<dbReference type="EMBL" id="AK314728">
    <property type="protein sequence ID" value="BAG37270.1"/>
    <property type="status" value="ALT_INIT"/>
    <property type="molecule type" value="mRNA"/>
</dbReference>
<dbReference type="EMBL" id="BC017340">
    <property type="protein sequence ID" value="AAH17340.2"/>
    <property type="molecule type" value="mRNA"/>
</dbReference>
<dbReference type="EMBL" id="BC111573">
    <property type="protein sequence ID" value="AAI11574.1"/>
    <property type="molecule type" value="mRNA"/>
</dbReference>
<dbReference type="EMBL" id="BC140883">
    <property type="protein sequence ID" value="AAI40884.1"/>
    <property type="status" value="ALT_INIT"/>
    <property type="molecule type" value="mRNA"/>
</dbReference>
<dbReference type="EMBL" id="BC140884">
    <property type="protein sequence ID" value="AAI40885.1"/>
    <property type="status" value="ALT_INIT"/>
    <property type="molecule type" value="mRNA"/>
</dbReference>
<dbReference type="EMBL" id="AF195026">
    <property type="protein sequence ID" value="AAL99353.1"/>
    <property type="molecule type" value="mRNA"/>
</dbReference>
<dbReference type="CCDS" id="CCDS13024.2"/>
<dbReference type="RefSeq" id="NP_543026.2">
    <property type="nucleotide sequence ID" value="NM_080836.4"/>
</dbReference>
<dbReference type="SMR" id="Q8TDR2"/>
<dbReference type="BioGRID" id="126760">
    <property type="interactions" value="29"/>
</dbReference>
<dbReference type="FunCoup" id="Q8TDR2">
    <property type="interactions" value="1965"/>
</dbReference>
<dbReference type="IntAct" id="Q8TDR2">
    <property type="interactions" value="21"/>
</dbReference>
<dbReference type="STRING" id="9606.ENSP00000370891"/>
<dbReference type="BindingDB" id="Q8TDR2"/>
<dbReference type="ChEMBL" id="CHEMBL5651"/>
<dbReference type="DrugBank" id="DB12010">
    <property type="generic name" value="Fostamatinib"/>
</dbReference>
<dbReference type="DrugCentral" id="Q8TDR2"/>
<dbReference type="GlyGen" id="Q8TDR2">
    <property type="glycosylation" value="1 site, 1 O-linked glycan (1 site)"/>
</dbReference>
<dbReference type="iPTMnet" id="Q8TDR2"/>
<dbReference type="PhosphoSitePlus" id="Q8TDR2"/>
<dbReference type="BioMuta" id="STK35"/>
<dbReference type="DMDM" id="292495039"/>
<dbReference type="CPTAC" id="CPTAC-3024"/>
<dbReference type="CPTAC" id="CPTAC-3025"/>
<dbReference type="jPOST" id="Q8TDR2"/>
<dbReference type="MassIVE" id="Q8TDR2"/>
<dbReference type="PaxDb" id="9606-ENSP00000370891"/>
<dbReference type="PeptideAtlas" id="Q8TDR2"/>
<dbReference type="ProteomicsDB" id="74332"/>
<dbReference type="Pumba" id="Q8TDR2"/>
<dbReference type="Antibodypedia" id="23148">
    <property type="antibodies" value="180 antibodies from 26 providers"/>
</dbReference>
<dbReference type="DNASU" id="140901"/>
<dbReference type="Ensembl" id="ENST00000381482.8">
    <property type="protein sequence ID" value="ENSP00000370891.3"/>
    <property type="gene ID" value="ENSG00000125834.13"/>
</dbReference>
<dbReference type="GeneID" id="140901"/>
<dbReference type="KEGG" id="hsa:140901"/>
<dbReference type="MANE-Select" id="ENST00000381482.8">
    <property type="protein sequence ID" value="ENSP00000370891.3"/>
    <property type="RefSeq nucleotide sequence ID" value="NM_080836.4"/>
    <property type="RefSeq protein sequence ID" value="NP_543026.2"/>
</dbReference>
<dbReference type="UCSC" id="uc002wfw.5">
    <property type="organism name" value="human"/>
</dbReference>
<dbReference type="AGR" id="HGNC:16254"/>
<dbReference type="CTD" id="140901"/>
<dbReference type="DisGeNET" id="140901"/>
<dbReference type="GeneCards" id="STK35"/>
<dbReference type="HGNC" id="HGNC:16254">
    <property type="gene designation" value="STK35"/>
</dbReference>
<dbReference type="HPA" id="ENSG00000125834">
    <property type="expression patterns" value="Tissue enriched (retina)"/>
</dbReference>
<dbReference type="MIM" id="609370">
    <property type="type" value="gene"/>
</dbReference>
<dbReference type="neXtProt" id="NX_Q8TDR2"/>
<dbReference type="OpenTargets" id="ENSG00000125834"/>
<dbReference type="PharmGKB" id="PA38097"/>
<dbReference type="VEuPathDB" id="HostDB:ENSG00000125834"/>
<dbReference type="eggNOG" id="KOG0595">
    <property type="taxonomic scope" value="Eukaryota"/>
</dbReference>
<dbReference type="GeneTree" id="ENSGT00940000158197"/>
<dbReference type="HOGENOM" id="CLU_026714_1_0_1"/>
<dbReference type="InParanoid" id="Q8TDR2"/>
<dbReference type="OMA" id="HDMLAVN"/>
<dbReference type="OrthoDB" id="4062651at2759"/>
<dbReference type="PAN-GO" id="Q8TDR2">
    <property type="GO annotations" value="3 GO annotations based on evolutionary models"/>
</dbReference>
<dbReference type="PhylomeDB" id="Q8TDR2"/>
<dbReference type="TreeFam" id="TF105336"/>
<dbReference type="PathwayCommons" id="Q8TDR2"/>
<dbReference type="SignaLink" id="Q8TDR2"/>
<dbReference type="SIGNOR" id="Q8TDR2"/>
<dbReference type="BioGRID-ORCS" id="140901">
    <property type="hits" value="25 hits in 1196 CRISPR screens"/>
</dbReference>
<dbReference type="ChiTaRS" id="STK35">
    <property type="organism name" value="human"/>
</dbReference>
<dbReference type="GeneWiki" id="Serine/threonine_kinase_35"/>
<dbReference type="GeneWiki" id="STK35L1"/>
<dbReference type="GenomeRNAi" id="140901"/>
<dbReference type="Pharos" id="Q8TDR2">
    <property type="development level" value="Tchem"/>
</dbReference>
<dbReference type="PRO" id="PR:Q8TDR2"/>
<dbReference type="Proteomes" id="UP000005640">
    <property type="component" value="Chromosome 20"/>
</dbReference>
<dbReference type="RNAct" id="Q8TDR2">
    <property type="molecule type" value="protein"/>
</dbReference>
<dbReference type="Bgee" id="ENSG00000125834">
    <property type="expression patterns" value="Expressed in secondary oocyte and 189 other cell types or tissues"/>
</dbReference>
<dbReference type="ExpressionAtlas" id="Q8TDR2">
    <property type="expression patterns" value="baseline and differential"/>
</dbReference>
<dbReference type="GO" id="GO:0005737">
    <property type="term" value="C:cytoplasm"/>
    <property type="evidence" value="ECO:0000318"/>
    <property type="project" value="GO_Central"/>
</dbReference>
<dbReference type="GO" id="GO:0016604">
    <property type="term" value="C:nuclear body"/>
    <property type="evidence" value="ECO:0000314"/>
    <property type="project" value="HPA"/>
</dbReference>
<dbReference type="GO" id="GO:0005730">
    <property type="term" value="C:nucleolus"/>
    <property type="evidence" value="ECO:0007669"/>
    <property type="project" value="UniProtKB-SubCell"/>
</dbReference>
<dbReference type="GO" id="GO:0005654">
    <property type="term" value="C:nucleoplasm"/>
    <property type="evidence" value="ECO:0000314"/>
    <property type="project" value="HPA"/>
</dbReference>
<dbReference type="GO" id="GO:0005634">
    <property type="term" value="C:nucleus"/>
    <property type="evidence" value="ECO:0000318"/>
    <property type="project" value="GO_Central"/>
</dbReference>
<dbReference type="GO" id="GO:0005524">
    <property type="term" value="F:ATP binding"/>
    <property type="evidence" value="ECO:0007669"/>
    <property type="project" value="UniProtKB-KW"/>
</dbReference>
<dbReference type="GO" id="GO:0004672">
    <property type="term" value="F:protein kinase activity"/>
    <property type="evidence" value="ECO:0000318"/>
    <property type="project" value="GO_Central"/>
</dbReference>
<dbReference type="GO" id="GO:0106310">
    <property type="term" value="F:protein serine kinase activity"/>
    <property type="evidence" value="ECO:0007669"/>
    <property type="project" value="RHEA"/>
</dbReference>
<dbReference type="GO" id="GO:0004674">
    <property type="term" value="F:protein serine/threonine kinase activity"/>
    <property type="evidence" value="ECO:0007669"/>
    <property type="project" value="UniProtKB-KW"/>
</dbReference>
<dbReference type="GO" id="GO:0010972">
    <property type="term" value="P:negative regulation of G2/M transition of mitotic cell cycle"/>
    <property type="evidence" value="ECO:0000318"/>
    <property type="project" value="GO_Central"/>
</dbReference>
<dbReference type="GO" id="GO:0110031">
    <property type="term" value="P:negative regulation of G2/MI transition of meiotic cell cycle"/>
    <property type="evidence" value="ECO:0000318"/>
    <property type="project" value="GO_Central"/>
</dbReference>
<dbReference type="CDD" id="cd13977">
    <property type="entry name" value="STKc_PDIK1L"/>
    <property type="match status" value="1"/>
</dbReference>
<dbReference type="FunFam" id="1.10.510.10:FF:000655">
    <property type="entry name" value="serine/threonine-protein kinase 35"/>
    <property type="match status" value="1"/>
</dbReference>
<dbReference type="FunFam" id="3.30.200.20:FF:000165">
    <property type="entry name" value="Serine/threonine-protein kinase PDIK1L"/>
    <property type="match status" value="1"/>
</dbReference>
<dbReference type="Gene3D" id="3.30.200.20">
    <property type="entry name" value="Phosphorylase Kinase, domain 1"/>
    <property type="match status" value="1"/>
</dbReference>
<dbReference type="Gene3D" id="1.10.510.10">
    <property type="entry name" value="Transferase(Phosphotransferase) domain 1"/>
    <property type="match status" value="1"/>
</dbReference>
<dbReference type="InterPro" id="IPR050339">
    <property type="entry name" value="CC_SR_Kinase"/>
</dbReference>
<dbReference type="InterPro" id="IPR011009">
    <property type="entry name" value="Kinase-like_dom_sf"/>
</dbReference>
<dbReference type="InterPro" id="IPR000719">
    <property type="entry name" value="Prot_kinase_dom"/>
</dbReference>
<dbReference type="InterPro" id="IPR017441">
    <property type="entry name" value="Protein_kinase_ATP_BS"/>
</dbReference>
<dbReference type="InterPro" id="IPR008271">
    <property type="entry name" value="Ser/Thr_kinase_AS"/>
</dbReference>
<dbReference type="PANTHER" id="PTHR11042">
    <property type="entry name" value="EUKARYOTIC TRANSLATION INITIATION FACTOR 2-ALPHA KINASE EIF2-ALPHA KINASE -RELATED"/>
    <property type="match status" value="1"/>
</dbReference>
<dbReference type="PANTHER" id="PTHR11042:SF59">
    <property type="entry name" value="SERINE_THREONINE-PROTEIN KINASE 35"/>
    <property type="match status" value="1"/>
</dbReference>
<dbReference type="Pfam" id="PF00069">
    <property type="entry name" value="Pkinase"/>
    <property type="match status" value="1"/>
</dbReference>
<dbReference type="SMART" id="SM00220">
    <property type="entry name" value="S_TKc"/>
    <property type="match status" value="1"/>
</dbReference>
<dbReference type="SUPFAM" id="SSF56112">
    <property type="entry name" value="Protein kinase-like (PK-like)"/>
    <property type="match status" value="1"/>
</dbReference>
<dbReference type="PROSITE" id="PS00107">
    <property type="entry name" value="PROTEIN_KINASE_ATP"/>
    <property type="match status" value="1"/>
</dbReference>
<dbReference type="PROSITE" id="PS50011">
    <property type="entry name" value="PROTEIN_KINASE_DOM"/>
    <property type="match status" value="1"/>
</dbReference>
<dbReference type="PROSITE" id="PS00108">
    <property type="entry name" value="PROTEIN_KINASE_ST"/>
    <property type="match status" value="1"/>
</dbReference>